<comment type="function">
    <text evidence="2">Alpha-conotoxins act on postsynaptic membranes, they bind to the nicotinic acetylcholine receptors (nAChR) and thus inhibit them. This toxin is an antagonist of all rat neuronal alpha-3-beta-2/CHRNA3-CHRNB2, alpha-4-beta-2/CHRNA4-CHRNB2 and alpha-7/CHRNA7 nAChR subtypes.</text>
</comment>
<comment type="subcellular location">
    <subcellularLocation>
        <location evidence="2">Secreted</location>
    </subcellularLocation>
</comment>
<comment type="tissue specificity">
    <text evidence="4">Expressed by the venom duct.</text>
</comment>
<comment type="domain">
    <text evidence="3">The cysteine framework is I (CC-C-C). Alpha4/6 pattern.</text>
</comment>
<comment type="mass spectrometry" mass="1742.44" method="Electrospray" evidence="2"/>
<comment type="similarity">
    <text evidence="3">Belongs to the conotoxin A superfamily.</text>
</comment>
<organism>
    <name type="scientific">Conus tinianus</name>
    <name type="common">Variable cone</name>
    <dbReference type="NCBI Taxonomy" id="909294"/>
    <lineage>
        <taxon>Eukaryota</taxon>
        <taxon>Metazoa</taxon>
        <taxon>Spiralia</taxon>
        <taxon>Lophotrochozoa</taxon>
        <taxon>Mollusca</taxon>
        <taxon>Gastropoda</taxon>
        <taxon>Caenogastropoda</taxon>
        <taxon>Neogastropoda</taxon>
        <taxon>Conoidea</taxon>
        <taxon>Conidae</taxon>
        <taxon>Conus</taxon>
        <taxon>Floraconus</taxon>
    </lineage>
</organism>
<dbReference type="GO" id="GO:0005576">
    <property type="term" value="C:extracellular region"/>
    <property type="evidence" value="ECO:0007669"/>
    <property type="project" value="UniProtKB-SubCell"/>
</dbReference>
<dbReference type="GO" id="GO:0035792">
    <property type="term" value="C:host cell postsynaptic membrane"/>
    <property type="evidence" value="ECO:0007669"/>
    <property type="project" value="UniProtKB-KW"/>
</dbReference>
<dbReference type="GO" id="GO:0030550">
    <property type="term" value="F:acetylcholine receptor inhibitor activity"/>
    <property type="evidence" value="ECO:0007669"/>
    <property type="project" value="UniProtKB-KW"/>
</dbReference>
<dbReference type="GO" id="GO:0099106">
    <property type="term" value="F:ion channel regulator activity"/>
    <property type="evidence" value="ECO:0007669"/>
    <property type="project" value="UniProtKB-KW"/>
</dbReference>
<dbReference type="GO" id="GO:0090729">
    <property type="term" value="F:toxin activity"/>
    <property type="evidence" value="ECO:0007669"/>
    <property type="project" value="UniProtKB-KW"/>
</dbReference>
<protein>
    <recommendedName>
        <fullName evidence="3">Alpha-conotoxin TiIA</fullName>
    </recommendedName>
</protein>
<proteinExistence type="evidence at protein level"/>
<evidence type="ECO:0000250" key="1">
    <source>
        <dbReference type="UniProtKB" id="K8DWB5"/>
    </source>
</evidence>
<evidence type="ECO:0000269" key="2">
    <source>
    </source>
</evidence>
<evidence type="ECO:0000305" key="3"/>
<evidence type="ECO:0000305" key="4">
    <source>
    </source>
</evidence>
<feature type="peptide" id="PRO_0000402137" description="Alpha-conotoxin TiIA" evidence="2">
    <location>
        <begin position="1"/>
        <end position="16"/>
    </location>
</feature>
<feature type="modified residue" description="Sulfotyrosine" evidence="2">
    <location>
        <position position="15"/>
    </location>
</feature>
<feature type="modified residue" description="Cysteine amide" evidence="2">
    <location>
        <position position="16"/>
    </location>
</feature>
<feature type="disulfide bond" evidence="1">
    <location>
        <begin position="3"/>
        <end position="9"/>
    </location>
</feature>
<feature type="disulfide bond" evidence="1">
    <location>
        <begin position="4"/>
        <end position="16"/>
    </location>
</feature>
<keyword id="KW-0008">Acetylcholine receptor inhibiting toxin</keyword>
<keyword id="KW-0027">Amidation</keyword>
<keyword id="KW-0903">Direct protein sequencing</keyword>
<keyword id="KW-1015">Disulfide bond</keyword>
<keyword id="KW-0872">Ion channel impairing toxin</keyword>
<keyword id="KW-0528">Neurotoxin</keyword>
<keyword id="KW-0629">Postsynaptic neurotoxin</keyword>
<keyword id="KW-0964">Secreted</keyword>
<keyword id="KW-0765">Sulfation</keyword>
<keyword id="KW-0800">Toxin</keyword>
<name>CA1A_CONTI</name>
<accession>P0CI05</accession>
<reference key="1">
    <citation type="journal article" date="2011" name="Toxicon">
        <title>Venomic study on cone snails (Conus spp.) from South Africa.</title>
        <authorList>
            <person name="Kauferstein S."/>
            <person name="Porth C."/>
            <person name="Kendel Y."/>
            <person name="Wunder C."/>
            <person name="Nicke A."/>
            <person name="Kordis D."/>
            <person name="Favreau P."/>
            <person name="Koua D."/>
            <person name="Stocklin R."/>
            <person name="Mebs D."/>
        </authorList>
    </citation>
    <scope>PROTEIN SEQUENCE</scope>
    <scope>MASS SPECTROMETRY</scope>
    <scope>FUNCTION</scope>
    <scope>SULFATION AT TYR-15</scope>
    <scope>AMIDATION AT CYS-16</scope>
    <scope>SUBCELLULAR LOCATION</scope>
    <source>
        <tissue>Venom</tissue>
    </source>
</reference>
<sequence length="16" mass="1669">GGCCSHPACQNNPDYC</sequence>